<reference key="1">
    <citation type="journal article" date="1997" name="J. Biol. Chem.">
        <title>Human IgGFc binding protein (FcgammaBP) in colonic epithelial cells exhibits mucin-like structure.</title>
        <authorList>
            <person name="Harada N."/>
            <person name="Iijima S."/>
            <person name="Kobayashi K."/>
            <person name="Yoshida T."/>
            <person name="Brown W.R."/>
            <person name="Hibi T."/>
            <person name="Oshima A."/>
            <person name="Morikawa M."/>
        </authorList>
    </citation>
    <scope>NUCLEOTIDE SEQUENCE [MRNA]</scope>
    <scope>VARIANTS ALA-2814; SER-4465; HIS-4906 AND VAL-5017</scope>
    <scope>FUNCTION</scope>
    <scope>INTERACTION WITH IGG</scope>
    <scope>TISSUE SPECIFICITY</scope>
    <source>
        <tissue>Colon epithelium</tissue>
    </source>
</reference>
<reference key="2">
    <citation type="journal article" date="2004" name="Nature">
        <title>The DNA sequence and biology of human chromosome 19.</title>
        <authorList>
            <person name="Grimwood J."/>
            <person name="Gordon L.A."/>
            <person name="Olsen A.S."/>
            <person name="Terry A."/>
            <person name="Schmutz J."/>
            <person name="Lamerdin J.E."/>
            <person name="Hellsten U."/>
            <person name="Goodstein D."/>
            <person name="Couronne O."/>
            <person name="Tran-Gyamfi M."/>
            <person name="Aerts A."/>
            <person name="Altherr M."/>
            <person name="Ashworth L."/>
            <person name="Bajorek E."/>
            <person name="Black S."/>
            <person name="Branscomb E."/>
            <person name="Caenepeel S."/>
            <person name="Carrano A.V."/>
            <person name="Caoile C."/>
            <person name="Chan Y.M."/>
            <person name="Christensen M."/>
            <person name="Cleland C.A."/>
            <person name="Copeland A."/>
            <person name="Dalin E."/>
            <person name="Dehal P."/>
            <person name="Denys M."/>
            <person name="Detter J.C."/>
            <person name="Escobar J."/>
            <person name="Flowers D."/>
            <person name="Fotopulos D."/>
            <person name="Garcia C."/>
            <person name="Georgescu A.M."/>
            <person name="Glavina T."/>
            <person name="Gomez M."/>
            <person name="Gonzales E."/>
            <person name="Groza M."/>
            <person name="Hammon N."/>
            <person name="Hawkins T."/>
            <person name="Haydu L."/>
            <person name="Ho I."/>
            <person name="Huang W."/>
            <person name="Israni S."/>
            <person name="Jett J."/>
            <person name="Kadner K."/>
            <person name="Kimball H."/>
            <person name="Kobayashi A."/>
            <person name="Larionov V."/>
            <person name="Leem S.-H."/>
            <person name="Lopez F."/>
            <person name="Lou Y."/>
            <person name="Lowry S."/>
            <person name="Malfatti S."/>
            <person name="Martinez D."/>
            <person name="McCready P.M."/>
            <person name="Medina C."/>
            <person name="Morgan J."/>
            <person name="Nelson K."/>
            <person name="Nolan M."/>
            <person name="Ovcharenko I."/>
            <person name="Pitluck S."/>
            <person name="Pollard M."/>
            <person name="Popkie A.P."/>
            <person name="Predki P."/>
            <person name="Quan G."/>
            <person name="Ramirez L."/>
            <person name="Rash S."/>
            <person name="Retterer J."/>
            <person name="Rodriguez A."/>
            <person name="Rogers S."/>
            <person name="Salamov A."/>
            <person name="Salazar A."/>
            <person name="She X."/>
            <person name="Smith D."/>
            <person name="Slezak T."/>
            <person name="Solovyev V."/>
            <person name="Thayer N."/>
            <person name="Tice H."/>
            <person name="Tsai M."/>
            <person name="Ustaszewska A."/>
            <person name="Vo N."/>
            <person name="Wagner M."/>
            <person name="Wheeler J."/>
            <person name="Wu K."/>
            <person name="Xie G."/>
            <person name="Yang J."/>
            <person name="Dubchak I."/>
            <person name="Furey T.S."/>
            <person name="DeJong P."/>
            <person name="Dickson M."/>
            <person name="Gordon D."/>
            <person name="Eichler E.E."/>
            <person name="Pennacchio L.A."/>
            <person name="Richardson P."/>
            <person name="Stubbs L."/>
            <person name="Rokhsar D.S."/>
            <person name="Myers R.M."/>
            <person name="Rubin E.M."/>
            <person name="Lucas S.M."/>
        </authorList>
    </citation>
    <scope>NUCLEOTIDE SEQUENCE [LARGE SCALE GENOMIC DNA]</scope>
</reference>
<reference key="3">
    <citation type="journal article" date="2001" name="Immunol. Lett.">
        <title>Detection of Fcgamma binding protein antigen in human sera and its relation with autoimmune diseases.</title>
        <authorList>
            <person name="Kobayashi K."/>
            <person name="Yagasaki M."/>
            <person name="Harada N."/>
            <person name="Chichibu K."/>
            <person name="Hibi T."/>
            <person name="Yoshida T."/>
            <person name="Brown W.R."/>
            <person name="Morikawa M."/>
        </authorList>
    </citation>
    <scope>TISSUE SPECIFICITY</scope>
</reference>
<reference key="4">
    <citation type="journal article" date="2002" name="J. Endocrinol.">
        <title>Differential expression of IgG Fc binding protein (FcgammaBP) in human normal thyroid tissue, thyroid adenomas and thyroid carcinomas.</title>
        <authorList>
            <person name="O'Donovan N."/>
            <person name="Fischer A."/>
            <person name="Abdo E.-M."/>
            <person name="Simon F."/>
            <person name="Peter H.J."/>
            <person name="Gerber H."/>
            <person name="Buergi U."/>
            <person name="Marti U."/>
        </authorList>
    </citation>
    <scope>TISSUE SPECIFICITY</scope>
</reference>
<reference key="5">
    <citation type="journal article" date="2004" name="Mol. Cell. Proteomics">
        <title>A proteomic analysis of human bile.</title>
        <authorList>
            <person name="Kristiansen T.Z."/>
            <person name="Bunkenborg J."/>
            <person name="Gronborg M."/>
            <person name="Molina H."/>
            <person name="Thuluvath P.J."/>
            <person name="Argani P."/>
            <person name="Goggins M.G."/>
            <person name="Maitra A."/>
            <person name="Pandey A."/>
        </authorList>
    </citation>
    <scope>GLYCOSYLATION [LARGE SCALE ANALYSIS] AT ASN-3719</scope>
    <source>
        <tissue>Bile</tissue>
    </source>
</reference>
<reference key="6">
    <citation type="journal article" date="2005" name="J. Proteome Res.">
        <title>Human plasma N-glycoproteome analysis by immunoaffinity subtraction, hydrazide chemistry, and mass spectrometry.</title>
        <authorList>
            <person name="Liu T."/>
            <person name="Qian W.-J."/>
            <person name="Gritsenko M.A."/>
            <person name="Camp D.G. II"/>
            <person name="Monroe M.E."/>
            <person name="Moore R.J."/>
            <person name="Smith R.D."/>
        </authorList>
    </citation>
    <scope>GLYCOSYLATION [LARGE SCALE ANALYSIS] AT ASN-75; ASN-91; ASN-1743; ASN-2138 AND ASN-2518</scope>
    <source>
        <tissue>Plasma</tissue>
    </source>
</reference>
<reference key="7">
    <citation type="journal article" date="2006" name="J. Proteome Res.">
        <title>Identification of N-linked glycoproteins in human saliva by glycoprotein capture and mass spectrometry.</title>
        <authorList>
            <person name="Ramachandran P."/>
            <person name="Boontheung P."/>
            <person name="Xie Y."/>
            <person name="Sondej M."/>
            <person name="Wong D.T."/>
            <person name="Loo J.A."/>
        </authorList>
    </citation>
    <scope>GLYCOSYLATION [LARGE SCALE ANALYSIS] AT ASN-2518</scope>
    <source>
        <tissue>Saliva</tissue>
    </source>
</reference>
<reference key="8">
    <citation type="journal article" date="2009" name="J. Proteome Res.">
        <title>Proteomic analyses of the two mucus layers of the colon barrier reveal that their main component, the Muc2 mucin, is strongly bound to the Fcgbp protein.</title>
        <authorList>
            <person name="Johansson M.E.V."/>
            <person name="Thomsson K.A."/>
            <person name="Hansson G.C."/>
        </authorList>
    </citation>
    <scope>INTERACTION WITH MUC2</scope>
</reference>
<reference key="9">
    <citation type="journal article" date="2009" name="Mol. Cell. Proteomics">
        <title>A strategy for precise and large scale identification of core fucosylated glycoproteins.</title>
        <authorList>
            <person name="Jia W."/>
            <person name="Lu Z."/>
            <person name="Fu Y."/>
            <person name="Wang H.P."/>
            <person name="Wang L.H."/>
            <person name="Chi H."/>
            <person name="Yuan Z.F."/>
            <person name="Zheng Z.B."/>
            <person name="Song L.N."/>
            <person name="Han H.H."/>
            <person name="Liang Y.M."/>
            <person name="Wang J.L."/>
            <person name="Cai Y."/>
            <person name="Zhang Y.K."/>
            <person name="Deng Y.L."/>
            <person name="Ying W.T."/>
            <person name="He S.M."/>
            <person name="Qian X.H."/>
        </authorList>
    </citation>
    <scope>GLYCOSYLATION AT ASN-1317</scope>
</reference>
<sequence>MGALWSWWILWAGATLLWGLTQEASVDLKNTGREEFLTAFLQNYQLAYSKAYPRLLISSLSESPASVSILSQADNTSKKVTVRPGESVMVNISAKAEMIGSKIFQHAVVIHSDYAISVQALNAKPDTAELTLLRPIQALGTEYFVLTPPGTSARNVKEFAVVAGAAGASVSVTLKGSVTFNGKFYPAGDVLRVTLQPYNVAQLQSSVDLSGSKVTASSPVAVLSGHSCAQKHTTCNHVVEQLLPTSAWGTHYVVPTLASQSRYDLAFVVASQATKLTYNHGGITGSRGLQAGDVVEFEVRPSWPLYLSANVGIQVLLFGTGAIRNEVTYDPYLVLIPDVAAYCPAYVVKSVPGCEGVALVVAQTKAISGLTIDGHAVGAKLTWEAVPGSEFSYAEVELGTADMIHTAEATTNLGLLTFGLAKAIGYATAADCGRTVLSPVEPSCEGMQCAAGQRCQVVGGKAGCVAESTAVCRAQGDPHYTTFDGRRYDMMGTCSYTMVELCSEDDTLPAFSVEAKNEHRGSRRVSYVGLVTVRAYSHSVSLTRGEVGFVLVDNQRSRLPVSLSEGRLRVYQSGPRAVVELVFGLVVTYDWDCQLALSLPARFQDQVCGLCGNYNGDPADDFLTPDGALAPDAVEFASSWKLDDGDYLCEDGCQNNCPACTPGQAQHYEGDRLCGMLTKLDGPFAVCHDTLDPRPFLEQCVYDLCVVGGERLSLCRGLSAYAQACLELGISVGDWRSPANCPLSCPANSRYELCGPACPTSCNGAAAPSNCSGRPCVEGCVCLPGFVASGGACVPASSCGCTFQGLQLAPGQEVWADELCQRRCTCNGATHQVTCRDKQSCPAGERCSVQNGLLGCYPDRFGTCQGSGDPHYVSFDGRRFDFMGTCTYLLVGSCGQNAALPAFRVLVENEHRGSQTVSYTRAVRVEARGVKVAVRREYPGQVLVDDVLQYLPFQAADGQVQVFRQGRDAVVRTDFGLTVTYDWNARVTAKVPSSYAEALCGLCGNFNGDPADDLALRGGGQAANALAFGNSWQEETRPGCGATEPGDCPKLDSLVAQQLQSKNECGILADPKGPFRECHSKLDPQGAVRDCVYDRCLLPGQSGPLCDALATYAAACQAAGATVHPWRSEELCPLSCPPHSHYEACSYGCPLSCGDLPVPGGCGSECHEGCVCDEGFALSGESCLPLASCGCVHQGTYHPPGQTFYPGPGCDSLCHCQEGGLVSCESSSCGPHEACQPSGGSLGCVAVGSSTCQASGDPHYTTFDGRRFDFMGTCVYVLAQTCGTRPGLHRFAVLQENVAWGNGRVSVTRVITVQVANFTLRLEQRQWKVTVNGVDMKLPVVLANGQIRASQHGSDVVIETDFGLRVAYDLVYYVRVTVPGNYYQQMCGLCGNYNGDPKDDFQKPNGSQAGNANEFGNSWEEVVPDSPCLPPTPCPPGSEDCIPSHKCPPELEKKYQKEEFCGLLSSPTGPLSSCHKLVDPQGPLKDCIFDLCLGGGNLSILCSNIHAYVSACQAAGGHVEPWRTETFCPMECPPNSHYELCADTCSLGCSALSAPPQCQDGCAEGCQCDSGFLYNGQACVPIQQCGCYHNGVYYEPEQTVLIDNCRQQCTCHAGKGMVCQEHSCKPGQVCQPSGGILSCVTKDPCHGVTCRPQETCKEQGGQGVCLPNYEATCWLWGDPHYHSFDGRKFDFQGTCNYVLATTGCPGVSTQGLTPFTVTTKNQNRGNPAVSYVRVVTVAALGTNISIHKDEIGKVRVNGVLTALPVSVADGRISVTQGASKALLVADFGLQVSYDWNWRVDVTLPSSYHGAVCGLCGNMDRNPNNDQVFPNGTLAPSIPIWGGSWRAPGWDPLCWDECRGSCPTCPEDRLEQYEGPGFCGPLAPGTGGPFTTCHAHVPPESFFKGCVLDVCMGGGDRDILCKALASYVAACQAAGVVIEDWRAQVGCEITCPENSHYEVCGSPCPASCPSPAPLTTPAVCEGPCVEGCQCDAGFVLSADRCVPLNNGCGCWANGTYHEAGSEFWADGTCSQWCRCGPGGGSLVCTPASCGLGEVCGLLPSGQHGCQPVSTAECQAWGDPHYVTLDGHRFNFQGTCEYLLSAPCHGPPLGAENFTVTVANEHRGSQAVSYTRSVTLQIYNHSLTLSARWPRKLQVDGVFVTLPFQLDSLLHAHLSGADVVVTTTSGLSLAFDGDSFVRLRVPAAYAGSLCGLCGNYNQDPADDLKAVGGKPAGWQVGGAQGCGECVSKPCPSPCTPEQQESFGGPDACGVISATDGPLAPCHGLVPPAQYFQGCLLDACQVQGHPGGLCPAVATYVAACQAAGAQLREWRRPDFCPFQCPAHSHYELCGDSCPGSCPSLSAPEGCESACREGCVCDAGFVLSGDTCVPVGQCGCLHDDRYYPLGQTFYPGPGCDSLCRCREGGEVSCEPSSCGPHETCRPSGGSLGCVAVGSTTCQASGDPHYTTFDGRRFDFMGTCVYVLAQTCGTRPGLHRFAVLQENVAWGNGRVSVTRVITVQVANFTLRLEQRQWKVTVNGVDMKLPVVLANGQIRASQHGSDVVIETDFGLRVAYDLVYYVRVTVPGNYYQLMCGLCGNYNGDPKDDFQKPNGSQAGNANEFGNSWEEVVPDSPCLPPPTCPPGSEGCIPSEECPPELEKKYQKEEFCGLLSSPTGPLSSCHKLVDPQGPLKDCIFDLCLGGGNLSILCSNIHAYVSACQAAGGQVEPWRNETFCPMECPQNSHYELCADTCSLGCSALSAPLQCPDGCAEGCQCDSGFLYNGQACVPIQQCGCYHNGAYYEPEQTVLIDNCRQQCTCHVGKVVVCQEHSCKPGQVCQPSGGILSCVNKDPCHGVTCRPQETCKEQGGQGVCLPNYEATCWLWGDPHYHSFDGRKFDFQGTCNYVLATTGCPGVSTQGLTPFTVTTKNQNRGNPAVSYVRVVTVAALGTNISIHKDEIGKVRVNGVLTALPVSVADGRISVTQGASKALLVADFGLQVSYDWNWRVDVTLPSSYHGAVCGLCGNMDRNPNNDQVFPNGTLAPSIPIWGGSWRAPGWDPLCWDECRGSCPTCPEDRLEQYEGPGFCGPLAPGTGGPFTTCHAHVPPESFFKGCVLDVCMGGGDRDILCKALASYVAACQAAGVVIEDWRAQVGCEITCPENSHYEVCGPPCPASCPSPAPLTTPAVCEGPCVEGCQCDAGFVLSADRCVPLNNGCGCWANGTYHEAGSEFWADGTCSQWCRCGPGGGSLVCTPASCGLGEVCGLLPSGQHGCQPVSTAECQAWGDPHYVTLDGHRFDFQGTCEYLLSAPCHGPPLGAENFTVTVANEHRGSQAVSYTRSVTLQIYNHSLTLSARWPRKLQVDGVFVTLPFQLDSLLHAHLSGADVVVTTTSGLSLAFDGDSFVRLRVPAAYAGSLCGLCGNYNQDPADDLKAVGGKPAGWQVGGAQGCGECVSKPCPSPCTPEQQESFGGPDACGVISATDGPLAPCHGLVPPAQYFQGCLLDACQVQGHPGGLCPAVATYVAACQAAGAQLREWRRPDFCPFQCPAHSHYELCGDSCPGSCPSLSAPEGCESACREGCVCDAGFVLSGDTCVPVGQCGCLHDDRYYPLGQTFYPGPGCDSLCRCREGGEVSCEPSSCGPHETCRPSGGSLGCVAVGSTTCQASGDPHYTTFDGHRFDFMGTCVYVLAQTCGTRPGLHRFAVLQENVAWGNGRVSVTRVITVQVANFTLRLEQRQWKVTVNGVDMKLPVVLANGQIRASQHGSDVVIETDFGLRVAYDLVYYVRVTVPGNYYQLMCGLCGNYNGDPKDDFQKPNGSQAGNANEFGNSWEEVVPDSPCLPPPTCPPGSAGCIPSDKCPPELEKKYQKEEFCGLLSSPTGPLSSCHKLVDPQGPLKDCIFDLCLGGGNLSILCSNIHAYVSACQAAGGHVEPWRNETFCPMECPQNSHYELCADTCSLGCSALSAPLQCPDGCAEGCQCDSGFLYNGQACVPIQQCGCYHNGVYYEPEQTVLIDNCRQQCTCHVGKVVVCQEHSCKPGQVCQPSGGILSCVTKDPCHGVTCRPQETCKEQGGQGVCLPNYEATCWLWGDPHYHSFDGRKFDFQGTCNYVLATTGCPGVSTQGLTPFTVTTKNQNRGNPAVSYVRVVTVAALGTNISIHKDEIGKVRVNGVLTALPVSVADGRISVAQGASKALLVADFGLQVSYDWNWRVDVTLPSSYHGAVCGLCGNMDRNPNNDQVFPNGTLAPSIPIWGGSWRAPGWDPLCWDECRGSCPTCPEDRLEQYEGPGFCGPLSSGTGGPFTTCHAHVPPESFFKGCVLDVCMGGGDRDILCKALASYVAACQAAGVVIEDWRAQVGCEITCPENSHYEVCGPPCPASCPSPAPLTTPAVCEGPCVEGCQCDAGFVLSADRCVPLNNGCGCWANGTYHEAGSEFWADGTCSQWCRCGPGGGSLVCTPASCGLGEVCGLLPSGQHGCQPVSTAECQAWGDPHYVTLDGHRFDFQGTCEYLLSAPCHGPPLGAENFTVTVANEHRGSQAVSYTRSVTLQIYNHSLTLSARWPRKLQVDGVFVALPFQLDSLLHAHLSGADVVVTTTSGLSLAFDGDSFVRLRVPAAYAASLCGLCGNYNQDPADDLKAVGGKPAGWQVGGAQGCGECVSKPCPSPCTPEQQESFGGPDACGVISATDGPLAPCHGLVPPAQYFQGCLLDACQVQGHPGGLCPAVATYVAACQAAGAQLGEWRRPDFCPLQCPAHSHYELCGDSCPVSCPSLSAPEGCESACREGCVCDAGFVLSGDTCVPVGQCGCLHDGRYYPLGEVFYPGPECERRCECGPGGHVTCQEGAACGPHEECRLEDGVQACHATGCGRCLANGGIHYITLDGRVYDLHGSCSYVLAQVCHPKPGDEDFSIVLEKNAAGDLQRLLVTVAGQVVSLAQGQQVTVDGEAVALPVAVGRVRVTAEGRNMVLQTTKGLRLLFDGDAHLLMSIPSPFRGRLCGLCGNFNGNWSDDFVLPNGSAASSVETFGAAWRAPGSSKGCGEGCGPQGCPVCLAEETAPYESNEACGQLRNPQGPFATCQAVLSPSEYFRQCVYDLCAQKGDKAFLCRSLAAYTAACQAAGVAVKPWRTDSFCPLHCPAHSHYSICTRTCQGSCAALSGLTGCTTRCFEGCECDDRFLLSQGVCIPVQDCGCTHNGRYLPVNSSLLTSDCSERCSCSSSSGLTCQAAGCPPGRVCEVKAEARNCWATRGLCVLSVGANLTTFDGARGATTSPGVYELSSRCPGLQNTIPWYRVVAEVQICHGKTEAVGQVHIFFQDGMVTLTPNKGVWVNGLRVDLPAEKLASVSVSRTPDGSLLVRQKAGVQVWLGANGKVAVIVSNDHAGKLCGACGNFDGDQTNDWHDSQEKPAMEKWRAQDFSPCYG</sequence>
<keyword id="KW-1015">Disulfide bond</keyword>
<keyword id="KW-0325">Glycoprotein</keyword>
<keyword id="KW-1267">Proteomics identification</keyword>
<keyword id="KW-1185">Reference proteome</keyword>
<keyword id="KW-0677">Repeat</keyword>
<keyword id="KW-0964">Secreted</keyword>
<keyword id="KW-0732">Signal</keyword>
<accession>Q9Y6R7</accession>
<accession>O95784</accession>
<feature type="signal peptide" evidence="1">
    <location>
        <begin position="1"/>
        <end position="23"/>
    </location>
</feature>
<feature type="chain" id="PRO_0000256698" description="IgGFc-binding protein">
    <location>
        <begin position="24"/>
        <end position="5405"/>
    </location>
</feature>
<feature type="domain" description="VWFD 1" evidence="2">
    <location>
        <begin position="470"/>
        <end position="650"/>
    </location>
</feature>
<feature type="domain" description="TIL 1">
    <location>
        <begin position="745"/>
        <end position="799"/>
    </location>
</feature>
<feature type="domain" description="VWFD 2" evidence="2">
    <location>
        <begin position="862"/>
        <end position="1041"/>
    </location>
</feature>
<feature type="domain" description="TIL 2">
    <location>
        <begin position="1136"/>
        <end position="1189"/>
    </location>
</feature>
<feature type="domain" description="VWFD 3" evidence="2">
    <location>
        <begin position="1250"/>
        <end position="1429"/>
    </location>
</feature>
<feature type="domain" description="TIL 3">
    <location>
        <begin position="1532"/>
        <end position="1585"/>
    </location>
</feature>
<feature type="domain" description="VWFD 4" evidence="2">
    <location>
        <begin position="1671"/>
        <end position="1854"/>
    </location>
</feature>
<feature type="domain" description="TIL 4">
    <location>
        <begin position="1950"/>
        <end position="2007"/>
    </location>
</feature>
<feature type="domain" description="VWFD 5" evidence="2">
    <location>
        <begin position="2070"/>
        <end position="2253"/>
    </location>
</feature>
<feature type="domain" description="TIL 5">
    <location>
        <begin position="2337"/>
        <end position="2390"/>
    </location>
</feature>
<feature type="domain" description="VWFD 6" evidence="2">
    <location>
        <begin position="2451"/>
        <end position="2630"/>
    </location>
</feature>
<feature type="domain" description="TIL 6">
    <location>
        <begin position="2733"/>
        <end position="2786"/>
    </location>
</feature>
<feature type="domain" description="VWFD 7" evidence="2">
    <location>
        <begin position="2872"/>
        <end position="3055"/>
    </location>
</feature>
<feature type="domain" description="TIL 7">
    <location>
        <begin position="3151"/>
        <end position="3208"/>
    </location>
</feature>
<feature type="domain" description="VWFD 8" evidence="2">
    <location>
        <begin position="3271"/>
        <end position="3454"/>
    </location>
</feature>
<feature type="domain" description="TIL 8">
    <location>
        <begin position="3538"/>
        <end position="3591"/>
    </location>
</feature>
<feature type="domain" description="VWFD 9" evidence="2">
    <location>
        <begin position="3652"/>
        <end position="3831"/>
    </location>
</feature>
<feature type="domain" description="TIL 9">
    <location>
        <begin position="3934"/>
        <end position="3987"/>
    </location>
</feature>
<feature type="domain" description="VWFD 10" evidence="2">
    <location>
        <begin position="4073"/>
        <end position="4256"/>
    </location>
</feature>
<feature type="domain" description="TIL 10">
    <location>
        <begin position="4352"/>
        <end position="4409"/>
    </location>
</feature>
<feature type="domain" description="VWFD 11" evidence="2">
    <location>
        <begin position="4472"/>
        <end position="4655"/>
    </location>
</feature>
<feature type="domain" description="TIL 11">
    <location>
        <begin position="4739"/>
        <end position="4792"/>
    </location>
</feature>
<feature type="domain" description="VWFD 12" evidence="2">
    <location>
        <begin position="4854"/>
        <end position="5025"/>
    </location>
</feature>
<feature type="domain" description="TIL 12">
    <location>
        <begin position="5121"/>
        <end position="5174"/>
    </location>
</feature>
<feature type="domain" description="VWFD 13" evidence="2">
    <location>
        <begin position="5233"/>
        <end position="5404"/>
    </location>
</feature>
<feature type="region of interest" description="IgGFc-binding">
    <location>
        <begin position="24"/>
        <end position="450"/>
    </location>
</feature>
<feature type="glycosylation site" description="N-linked (GlcNAc...) asparagine" evidence="6">
    <location>
        <position position="75"/>
    </location>
</feature>
<feature type="glycosylation site" description="N-linked (GlcNAc...) asparagine" evidence="6">
    <location>
        <position position="91"/>
    </location>
</feature>
<feature type="glycosylation site" description="N-linked (GlcNAc...) (complex) asparagine" evidence="8">
    <location>
        <position position="1317"/>
    </location>
</feature>
<feature type="glycosylation site" description="N-linked (GlcNAc...) asparagine" evidence="6">
    <location>
        <position position="1743"/>
    </location>
</feature>
<feature type="glycosylation site" description="N-linked (GlcNAc...) asparagine" evidence="6">
    <location>
        <position position="2138"/>
    </location>
</feature>
<feature type="glycosylation site" description="N-linked (GlcNAc...) asparagine" evidence="6 7">
    <location>
        <position position="2518"/>
    </location>
</feature>
<feature type="glycosylation site" description="N-linked (GlcNAc...) asparagine" evidence="5">
    <location>
        <position position="3719"/>
    </location>
</feature>
<feature type="glycosylation site" description="N-linked (GlcNAc...) asparagine" evidence="1">
    <location>
        <position position="4145"/>
    </location>
</feature>
<feature type="glycosylation site" description="N-linked (GlcNAc...) asparagine" evidence="1">
    <location>
        <position position="4540"/>
    </location>
</feature>
<feature type="disulfide bond" evidence="2">
    <location>
        <begin position="472"/>
        <end position="611"/>
    </location>
</feature>
<feature type="disulfide bond" evidence="2">
    <location>
        <begin position="494"/>
        <end position="649"/>
    </location>
</feature>
<feature type="disulfide bond" evidence="2">
    <location>
        <begin position="864"/>
        <end position="1003"/>
    </location>
</feature>
<feature type="disulfide bond" evidence="2">
    <location>
        <begin position="886"/>
        <end position="1040"/>
    </location>
</feature>
<feature type="disulfide bond" evidence="2">
    <location>
        <begin position="1252"/>
        <end position="1390"/>
    </location>
</feature>
<feature type="disulfide bond" evidence="2">
    <location>
        <begin position="1274"/>
        <end position="1428"/>
    </location>
</feature>
<feature type="disulfide bond" evidence="2">
    <location>
        <begin position="1673"/>
        <end position="1815"/>
    </location>
</feature>
<feature type="disulfide bond" evidence="2">
    <location>
        <begin position="1695"/>
        <end position="1853"/>
    </location>
</feature>
<feature type="disulfide bond" evidence="2">
    <location>
        <begin position="1704"/>
        <end position="1812"/>
    </location>
</feature>
<feature type="disulfide bond" evidence="2">
    <location>
        <begin position="2072"/>
        <end position="2211"/>
    </location>
</feature>
<feature type="disulfide bond" evidence="2">
    <location>
        <begin position="2094"/>
        <end position="2252"/>
    </location>
</feature>
<feature type="disulfide bond" evidence="2">
    <location>
        <begin position="2453"/>
        <end position="2591"/>
    </location>
</feature>
<feature type="disulfide bond" evidence="2">
    <location>
        <begin position="2475"/>
        <end position="2629"/>
    </location>
</feature>
<feature type="disulfide bond" evidence="2">
    <location>
        <begin position="2874"/>
        <end position="3016"/>
    </location>
</feature>
<feature type="disulfide bond" evidence="2">
    <location>
        <begin position="2896"/>
        <end position="3054"/>
    </location>
</feature>
<feature type="disulfide bond" evidence="2">
    <location>
        <begin position="2905"/>
        <end position="3013"/>
    </location>
</feature>
<feature type="disulfide bond" evidence="2">
    <location>
        <begin position="3273"/>
        <end position="3412"/>
    </location>
</feature>
<feature type="disulfide bond" evidence="2">
    <location>
        <begin position="3295"/>
        <end position="3453"/>
    </location>
</feature>
<feature type="disulfide bond" evidence="2">
    <location>
        <begin position="3654"/>
        <end position="3792"/>
    </location>
</feature>
<feature type="disulfide bond" evidence="2">
    <location>
        <begin position="3676"/>
        <end position="3830"/>
    </location>
</feature>
<feature type="disulfide bond" evidence="2">
    <location>
        <begin position="4075"/>
        <end position="4217"/>
    </location>
</feature>
<feature type="disulfide bond" evidence="2">
    <location>
        <begin position="4097"/>
        <end position="4255"/>
    </location>
</feature>
<feature type="disulfide bond" evidence="2">
    <location>
        <begin position="4106"/>
        <end position="4214"/>
    </location>
</feature>
<feature type="disulfide bond" evidence="2">
    <location>
        <begin position="4474"/>
        <end position="4613"/>
    </location>
</feature>
<feature type="disulfide bond" evidence="2">
    <location>
        <begin position="4496"/>
        <end position="4654"/>
    </location>
</feature>
<feature type="disulfide bond" evidence="2">
    <location>
        <begin position="4856"/>
        <end position="4986"/>
    </location>
</feature>
<feature type="disulfide bond" evidence="2">
    <location>
        <begin position="4878"/>
        <end position="5024"/>
    </location>
</feature>
<feature type="disulfide bond" evidence="2">
    <location>
        <begin position="5235"/>
        <end position="5372"/>
    </location>
</feature>
<feature type="sequence variant" id="VAR_054490" description="In dbSNP:rs34181317.">
    <original>V</original>
    <variation>A</variation>
    <location>
        <position position="732"/>
    </location>
</feature>
<feature type="sequence variant" id="VAR_054491" description="In dbSNP:rs34939346.">
    <original>N</original>
    <variation>S</variation>
    <location>
        <position position="770"/>
    </location>
</feature>
<feature type="sequence variant" id="VAR_054492" description="In dbSNP:rs35338934.">
    <original>G</original>
    <variation>R</variation>
    <location>
        <position position="929"/>
    </location>
</feature>
<feature type="sequence variant" id="VAR_054493" description="In dbSNP:rs35922811.">
    <original>V</original>
    <variation>M</variation>
    <location>
        <position position="971"/>
    </location>
</feature>
<feature type="sequence variant" id="VAR_054494" description="In dbSNP:rs34254649.">
    <original>G</original>
    <variation>R</variation>
    <location>
        <position position="1019"/>
    </location>
</feature>
<feature type="sequence variant" id="VAR_028903" description="In dbSNP:rs11083543.">
    <original>V</original>
    <variation>L</variation>
    <location>
        <position position="1340"/>
    </location>
</feature>
<feature type="sequence variant" id="VAR_054495" description="In dbSNP:rs36106401.">
    <original>P</original>
    <variation>L</variation>
    <location>
        <position position="1436"/>
    </location>
</feature>
<feature type="sequence variant" id="VAR_054496" description="In dbSNP:rs2909229.">
    <original>H</original>
    <variation>D</variation>
    <location>
        <position position="1445"/>
    </location>
</feature>
<feature type="sequence variant" id="VAR_054497" description="In dbSNP:rs34938990.">
    <original>T</original>
    <variation>N</variation>
    <location>
        <position position="1524"/>
    </location>
</feature>
<feature type="sequence variant" id="VAR_028904" description="In dbSNP:rs7248839.">
    <original>G</original>
    <variation>V</variation>
    <location>
        <position position="1616"/>
    </location>
</feature>
<feature type="sequence variant" id="VAR_028905" description="In dbSNP:rs7249743.">
    <original>M</original>
    <variation>V</variation>
    <location>
        <position position="1617"/>
    </location>
</feature>
<feature type="sequence variant" id="VAR_028906" description="In dbSNP:rs1599891568.">
    <original>N</original>
    <variation>D</variation>
    <location>
        <position position="2089"/>
    </location>
</feature>
<feature type="sequence variant" id="VAR_028907" description="In dbSNP:rs140171218.">
    <original>E</original>
    <variation>D</variation>
    <location>
        <position position="2646"/>
    </location>
</feature>
<feature type="sequence variant" id="VAR_028908" description="In dbSNP:rs1176978283.">
    <original>E</original>
    <variation>K</variation>
    <location>
        <position position="2647"/>
    </location>
</feature>
<feature type="sequence variant" id="VAR_028909" description="In dbSNP:rs2542316.">
    <original>A</original>
    <variation>V</variation>
    <location>
        <position position="2793"/>
    </location>
</feature>
<feature type="sequence variant" id="VAR_028910" description="In dbSNP:rs141158749." evidence="10">
    <original>V</original>
    <variation>A</variation>
    <location>
        <position position="2814"/>
    </location>
</feature>
<feature type="sequence variant" id="VAR_028911" description="In dbSNP:rs1290971390.">
    <original>G</original>
    <variation>S</variation>
    <location>
        <position position="3264"/>
    </location>
</feature>
<feature type="sequence variant" id="VAR_028912" description="In dbSNP:rs2542318.">
    <original>H</original>
    <variation>Q</variation>
    <location>
        <position position="3920"/>
    </location>
</feature>
<feature type="sequence variant" id="VAR_028913" description="In dbSNP:rs3746009.">
    <original>V</original>
    <variation>A</variation>
    <location>
        <position position="4015"/>
    </location>
</feature>
<feature type="sequence variant" id="VAR_028914" description="In dbSNP:rs1975181.">
    <original>G</original>
    <variation>D</variation>
    <location>
        <position position="4095"/>
    </location>
</feature>
<feature type="sequence variant" id="VAR_028915" description="In dbSNP:rs6508919." evidence="10">
    <original>G</original>
    <variation>S</variation>
    <location>
        <position position="4465"/>
    </location>
</feature>
<feature type="sequence variant" id="VAR_028916" description="In dbSNP:rs3746013." evidence="10">
    <original>D</original>
    <variation>H</variation>
    <location>
        <position position="4906"/>
    </location>
</feature>
<feature type="sequence variant" id="VAR_054498" description="In dbSNP:rs741143." evidence="10">
    <original>A</original>
    <variation>V</variation>
    <location>
        <position position="5017"/>
    </location>
</feature>
<feature type="sequence conflict" description="In Ref. 1; BAA19526." evidence="11" ref="1">
    <original>S</original>
    <variation>P</variation>
    <location>
        <position position="1961"/>
    </location>
</feature>
<feature type="sequence conflict" description="In Ref. 1; BAA19526." evidence="11" ref="1">
    <original>Q</original>
    <variation>H</variation>
    <location>
        <position position="2719"/>
    </location>
</feature>
<feature type="sequence conflict" description="In Ref. 1; BAA19526." evidence="11" ref="1">
    <original>N</original>
    <variation>T</variation>
    <location>
        <position position="2842"/>
    </location>
</feature>
<feature type="sequence conflict" description="In Ref. 1; BAA19526." evidence="11" ref="1">
    <original>T</original>
    <variation>A</variation>
    <location>
        <position position="2976"/>
    </location>
</feature>
<feature type="sequence conflict" description="In Ref. 1; BAA19526." evidence="11" ref="1">
    <original>R</original>
    <variation>H</variation>
    <location>
        <position position="3117"/>
    </location>
</feature>
<feature type="sequence conflict" description="In Ref. 1; BAA19526." evidence="11" ref="1">
    <original>H</original>
    <variation>R</variation>
    <location>
        <position position="3668"/>
    </location>
</feature>
<feature type="sequence conflict" description="In Ref. 1; BAA19526." evidence="11" ref="1">
    <original>A</original>
    <variation>E</variation>
    <location>
        <position position="3841"/>
    </location>
</feature>
<feature type="sequence conflict" description="In Ref. 1; BAA19526." evidence="11" ref="1">
    <original>DK</original>
    <variation>EE</variation>
    <location>
        <begin position="3847"/>
        <end position="3848"/>
    </location>
</feature>
<feature type="sequence conflict" description="In Ref. 1; BAA19526." evidence="11" ref="1">
    <original>T</original>
    <variation>N</variation>
    <location>
        <position position="4043"/>
    </location>
</feature>
<feature type="sequence conflict" description="In Ref. 1; BAA19526." evidence="11" ref="1">
    <original>S</original>
    <variation>A</variation>
    <location>
        <position position="4284"/>
    </location>
</feature>
<feature type="sequence conflict" description="In Ref. 1; BAA19526." evidence="11" ref="1">
    <original>R</original>
    <variation>H</variation>
    <location>
        <position position="4318"/>
    </location>
</feature>
<organism>
    <name type="scientific">Homo sapiens</name>
    <name type="common">Human</name>
    <dbReference type="NCBI Taxonomy" id="9606"/>
    <lineage>
        <taxon>Eukaryota</taxon>
        <taxon>Metazoa</taxon>
        <taxon>Chordata</taxon>
        <taxon>Craniata</taxon>
        <taxon>Vertebrata</taxon>
        <taxon>Euteleostomi</taxon>
        <taxon>Mammalia</taxon>
        <taxon>Eutheria</taxon>
        <taxon>Euarchontoglires</taxon>
        <taxon>Primates</taxon>
        <taxon>Haplorrhini</taxon>
        <taxon>Catarrhini</taxon>
        <taxon>Hominidae</taxon>
        <taxon>Homo</taxon>
    </lineage>
</organism>
<proteinExistence type="evidence at protein level"/>
<name>FCGBP_HUMAN</name>
<evidence type="ECO:0000255" key="1"/>
<evidence type="ECO:0000255" key="2">
    <source>
        <dbReference type="PROSITE-ProRule" id="PRU00580"/>
    </source>
</evidence>
<evidence type="ECO:0000269" key="3">
    <source>
    </source>
</evidence>
<evidence type="ECO:0000269" key="4">
    <source>
    </source>
</evidence>
<evidence type="ECO:0000269" key="5">
    <source>
    </source>
</evidence>
<evidence type="ECO:0000269" key="6">
    <source>
    </source>
</evidence>
<evidence type="ECO:0000269" key="7">
    <source>
    </source>
</evidence>
<evidence type="ECO:0000269" key="8">
    <source>
    </source>
</evidence>
<evidence type="ECO:0000269" key="9">
    <source>
    </source>
</evidence>
<evidence type="ECO:0000269" key="10">
    <source>
    </source>
</evidence>
<evidence type="ECO:0000305" key="11"/>
<dbReference type="EMBL" id="D84239">
    <property type="protein sequence ID" value="BAA19526.1"/>
    <property type="molecule type" value="mRNA"/>
</dbReference>
<dbReference type="EMBL" id="AC006950">
    <property type="protein sequence ID" value="AAD15624.1"/>
    <property type="molecule type" value="Genomic_DNA"/>
</dbReference>
<dbReference type="EMBL" id="AC007842">
    <property type="protein sequence ID" value="AAD39266.1"/>
    <property type="molecule type" value="Genomic_DNA"/>
</dbReference>
<dbReference type="EMBL" id="AC011536">
    <property type="status" value="NOT_ANNOTATED_CDS"/>
    <property type="molecule type" value="Genomic_DNA"/>
</dbReference>
<dbReference type="RefSeq" id="NP_003881.2">
    <property type="nucleotide sequence ID" value="NM_003890.3"/>
</dbReference>
<dbReference type="RefSeq" id="XP_054187618.1">
    <property type="nucleotide sequence ID" value="XM_054331643.1"/>
</dbReference>
<dbReference type="RefSeq" id="XP_054187619.1">
    <property type="nucleotide sequence ID" value="XM_054331644.1"/>
</dbReference>
<dbReference type="SMR" id="Q9Y6R7"/>
<dbReference type="BioGRID" id="114381">
    <property type="interactions" value="19"/>
</dbReference>
<dbReference type="FunCoup" id="Q9Y6R7">
    <property type="interactions" value="129"/>
</dbReference>
<dbReference type="IntAct" id="Q9Y6R7">
    <property type="interactions" value="20"/>
</dbReference>
<dbReference type="MINT" id="Q9Y6R7"/>
<dbReference type="STRING" id="9606.ENSP00000481056"/>
<dbReference type="MEROPS" id="I08.954"/>
<dbReference type="GlyConnect" id="1386">
    <property type="glycosylation" value="21 N-Linked glycans (10 sites)"/>
</dbReference>
<dbReference type="GlyCosmos" id="Q9Y6R7">
    <property type="glycosylation" value="18 sites, 28 glycans"/>
</dbReference>
<dbReference type="GlyGen" id="Q9Y6R7">
    <property type="glycosylation" value="21 sites, 46 N-linked glycans (11 sites), 1 O-linked glycan (3 sites)"/>
</dbReference>
<dbReference type="iPTMnet" id="Q9Y6R7"/>
<dbReference type="PhosphoSitePlus" id="Q9Y6R7"/>
<dbReference type="BioMuta" id="FCGBP"/>
<dbReference type="DMDM" id="224471888"/>
<dbReference type="CPTAC" id="non-CPTAC-1133"/>
<dbReference type="jPOST" id="Q9Y6R7"/>
<dbReference type="MassIVE" id="Q9Y6R7"/>
<dbReference type="ProteomicsDB" id="86780"/>
<dbReference type="DNASU" id="8857"/>
<dbReference type="Ensembl" id="ENST00000628705.3">
    <property type="protein sequence ID" value="ENSP00000487490.3"/>
    <property type="gene ID" value="ENSG00000281123.5"/>
</dbReference>
<dbReference type="GeneID" id="8857"/>
<dbReference type="KEGG" id="hsa:8857"/>
<dbReference type="MANE-Select" id="ENST00000628705.3">
    <property type="protein sequence ID" value="ENSP00000487490.3"/>
    <property type="RefSeq nucleotide sequence ID" value="NM_003890.3"/>
    <property type="RefSeq protein sequence ID" value="NP_003881.2"/>
</dbReference>
<dbReference type="AGR" id="HGNC:13572"/>
<dbReference type="CTD" id="8857"/>
<dbReference type="DisGeNET" id="8857"/>
<dbReference type="GeneCards" id="FCGBP"/>
<dbReference type="HGNC" id="HGNC:13572">
    <property type="gene designation" value="FCGBP"/>
</dbReference>
<dbReference type="MIM" id="617553">
    <property type="type" value="gene"/>
</dbReference>
<dbReference type="neXtProt" id="NX_Q9Y6R7"/>
<dbReference type="PharmGKB" id="PA28059"/>
<dbReference type="InParanoid" id="Q9Y6R7"/>
<dbReference type="OrthoDB" id="3438930at2759"/>
<dbReference type="PAN-GO" id="Q9Y6R7">
    <property type="GO annotations" value="2 GO annotations based on evolutionary models"/>
</dbReference>
<dbReference type="PhylomeDB" id="Q9Y6R7"/>
<dbReference type="TreeFam" id="TF316399"/>
<dbReference type="PathwayCommons" id="Q9Y6R7"/>
<dbReference type="SignaLink" id="Q9Y6R7"/>
<dbReference type="BioGRID-ORCS" id="8857">
    <property type="hits" value="16 hits in 1055 CRISPR screens"/>
</dbReference>
<dbReference type="ChiTaRS" id="FCGBP">
    <property type="organism name" value="human"/>
</dbReference>
<dbReference type="GeneWiki" id="FCGBP"/>
<dbReference type="GenomeRNAi" id="8857"/>
<dbReference type="Pharos" id="Q9Y6R7">
    <property type="development level" value="Tbio"/>
</dbReference>
<dbReference type="PRO" id="PR:Q9Y6R7"/>
<dbReference type="Proteomes" id="UP000005640">
    <property type="component" value="Unplaced"/>
</dbReference>
<dbReference type="RNAct" id="Q9Y6R7">
    <property type="molecule type" value="protein"/>
</dbReference>
<dbReference type="GO" id="GO:0070062">
    <property type="term" value="C:extracellular exosome"/>
    <property type="evidence" value="ECO:0007005"/>
    <property type="project" value="UniProtKB"/>
</dbReference>
<dbReference type="GO" id="GO:0031012">
    <property type="term" value="C:extracellular matrix"/>
    <property type="evidence" value="ECO:0000318"/>
    <property type="project" value="GO_Central"/>
</dbReference>
<dbReference type="GO" id="GO:0005615">
    <property type="term" value="C:extracellular space"/>
    <property type="evidence" value="ECO:0000318"/>
    <property type="project" value="GO_Central"/>
</dbReference>
<dbReference type="CDD" id="cd19941">
    <property type="entry name" value="TIL"/>
    <property type="match status" value="12"/>
</dbReference>
<dbReference type="FunFam" id="2.10.25.10:FF:000055">
    <property type="entry name" value="alpha-tectorin isoform X1"/>
    <property type="match status" value="5"/>
</dbReference>
<dbReference type="FunFam" id="2.10.25.10:FF:000153">
    <property type="entry name" value="MUC5B isoform 1"/>
    <property type="match status" value="6"/>
</dbReference>
<dbReference type="FunFam" id="2.10.25.10:FF:000674">
    <property type="entry name" value="Mucin-2"/>
    <property type="match status" value="1"/>
</dbReference>
<dbReference type="Gene3D" id="2.10.25.10">
    <property type="entry name" value="Laminin"/>
    <property type="match status" value="12"/>
</dbReference>
<dbReference type="InterPro" id="IPR000742">
    <property type="entry name" value="EGF-like_dom"/>
</dbReference>
<dbReference type="InterPro" id="IPR003645">
    <property type="entry name" value="Fol_N"/>
</dbReference>
<dbReference type="InterPro" id="IPR035234">
    <property type="entry name" value="IgGFc-bd_N"/>
</dbReference>
<dbReference type="InterPro" id="IPR050780">
    <property type="entry name" value="Mucin_vWF_Thrombospondin_sf"/>
</dbReference>
<dbReference type="InterPro" id="IPR036084">
    <property type="entry name" value="Ser_inhib-like_sf"/>
</dbReference>
<dbReference type="InterPro" id="IPR002919">
    <property type="entry name" value="TIL_dom"/>
</dbReference>
<dbReference type="InterPro" id="IPR025615">
    <property type="entry name" value="TILa_dom"/>
</dbReference>
<dbReference type="InterPro" id="IPR014853">
    <property type="entry name" value="VWF/SSPO/ZAN-like_Cys-rich_dom"/>
</dbReference>
<dbReference type="InterPro" id="IPR001007">
    <property type="entry name" value="VWF_dom"/>
</dbReference>
<dbReference type="InterPro" id="IPR001846">
    <property type="entry name" value="VWF_type-D"/>
</dbReference>
<dbReference type="PANTHER" id="PTHR11339">
    <property type="entry name" value="EXTRACELLULAR MATRIX GLYCOPROTEIN RELATED"/>
    <property type="match status" value="1"/>
</dbReference>
<dbReference type="PANTHER" id="PTHR11339:SF244">
    <property type="entry name" value="IGGFC-BINDING PROTEIN"/>
    <property type="match status" value="1"/>
</dbReference>
<dbReference type="Pfam" id="PF08742">
    <property type="entry name" value="C8"/>
    <property type="match status" value="12"/>
</dbReference>
<dbReference type="Pfam" id="PF17517">
    <property type="entry name" value="IgGFc_binding"/>
    <property type="match status" value="1"/>
</dbReference>
<dbReference type="Pfam" id="PF01826">
    <property type="entry name" value="TIL"/>
    <property type="match status" value="12"/>
</dbReference>
<dbReference type="Pfam" id="PF12714">
    <property type="entry name" value="TILa"/>
    <property type="match status" value="11"/>
</dbReference>
<dbReference type="Pfam" id="PF00094">
    <property type="entry name" value="VWD"/>
    <property type="match status" value="13"/>
</dbReference>
<dbReference type="SMART" id="SM00832">
    <property type="entry name" value="C8"/>
    <property type="match status" value="12"/>
</dbReference>
<dbReference type="SMART" id="SM00181">
    <property type="entry name" value="EGF"/>
    <property type="match status" value="7"/>
</dbReference>
<dbReference type="SMART" id="SM00274">
    <property type="entry name" value="FOLN"/>
    <property type="match status" value="9"/>
</dbReference>
<dbReference type="SMART" id="SM00214">
    <property type="entry name" value="VWC"/>
    <property type="match status" value="7"/>
</dbReference>
<dbReference type="SMART" id="SM00215">
    <property type="entry name" value="VWC_out"/>
    <property type="match status" value="11"/>
</dbReference>
<dbReference type="SMART" id="SM00216">
    <property type="entry name" value="VWD"/>
    <property type="match status" value="13"/>
</dbReference>
<dbReference type="SUPFAM" id="SSF57567">
    <property type="entry name" value="Serine protease inhibitors"/>
    <property type="match status" value="12"/>
</dbReference>
<dbReference type="PROSITE" id="PS51233">
    <property type="entry name" value="VWFD"/>
    <property type="match status" value="13"/>
</dbReference>
<comment type="function">
    <text evidence="10">May be involved in the maintenance of the mucosal structure as a gel-like component of the mucosa.</text>
</comment>
<comment type="subunit">
    <text evidence="9 10">Interacts with the Fc portion of IgG and with MUC2.</text>
</comment>
<comment type="interaction">
    <interactant intactId="EBI-2869882">
        <id>Q9Y6R7</id>
    </interactant>
    <interactant intactId="EBI-10224676">
        <id>Q07654</id>
        <label>TFF3</label>
    </interactant>
    <organismsDiffer>false</organismsDiffer>
    <experiments>2</experiments>
</comment>
<comment type="subcellular location">
    <subcellularLocation>
        <location evidence="11">Secreted</location>
    </subcellularLocation>
</comment>
<comment type="tissue specificity">
    <text evidence="3 4 10">Mainly expressed in placenta and colon epithelium. Expressed in thyroid, and down-regulated in thyroid carcinomas. Present in serum, with higher levels in patients with various autoimmune diseases (at protein level).</text>
</comment>
<comment type="domain">
    <text>The N-terminal IgGFc-binding region is primate-specific.</text>
</comment>
<protein>
    <recommendedName>
        <fullName>IgGFc-binding protein</fullName>
    </recommendedName>
    <alternativeName>
        <fullName>Fcgamma-binding protein antigen</fullName>
        <shortName>FcgammaBP</shortName>
    </alternativeName>
</protein>
<gene>
    <name type="primary">FCGBP</name>
</gene>